<keyword id="KW-0050">Antiport</keyword>
<keyword id="KW-1003">Cell membrane</keyword>
<keyword id="KW-0325">Glycoprotein</keyword>
<keyword id="KW-0472">Membrane</keyword>
<keyword id="KW-1185">Reference proteome</keyword>
<keyword id="KW-0812">Transmembrane</keyword>
<keyword id="KW-1133">Transmembrane helix</keyword>
<keyword id="KW-0813">Transport</keyword>
<evidence type="ECO:0000250" key="1">
    <source>
        <dbReference type="UniProtKB" id="Q53GD3"/>
    </source>
</evidence>
<evidence type="ECO:0000250" key="2">
    <source>
        <dbReference type="UniProtKB" id="Q7T2B0"/>
    </source>
</evidence>
<evidence type="ECO:0000255" key="3"/>
<evidence type="ECO:0000305" key="4"/>
<gene>
    <name evidence="1" type="primary">SLC44A4</name>
    <name evidence="1" type="synonym">CTL4</name>
    <name evidence="1" type="synonym">TPPT1</name>
</gene>
<organism>
    <name type="scientific">Bos taurus</name>
    <name type="common">Bovine</name>
    <dbReference type="NCBI Taxonomy" id="9913"/>
    <lineage>
        <taxon>Eukaryota</taxon>
        <taxon>Metazoa</taxon>
        <taxon>Chordata</taxon>
        <taxon>Craniata</taxon>
        <taxon>Vertebrata</taxon>
        <taxon>Euteleostomi</taxon>
        <taxon>Mammalia</taxon>
        <taxon>Eutheria</taxon>
        <taxon>Laurasiatheria</taxon>
        <taxon>Artiodactyla</taxon>
        <taxon>Ruminantia</taxon>
        <taxon>Pecora</taxon>
        <taxon>Bovidae</taxon>
        <taxon>Bovinae</taxon>
        <taxon>Bos</taxon>
    </lineage>
</organism>
<accession>A3KMY4</accession>
<comment type="function">
    <text evidence="1 2">Choline transporter that plays a role in the choline-acetylcholine system and is required to the efferent innervation of hair cells in the olivocochlear bundle for the maintenance of physiological function of outer hair cells and the protection of hair cells from acoustic injury (By similarity). Also described as a thiamine pyrophosphate transporter in colon, may mediate the absorption of microbiota-generated thiamine pyrophosphate and contribute to host thiamine (vitamin B1) homeostasis (By similarity).</text>
</comment>
<comment type="catalytic activity">
    <reaction evidence="1">
        <text>choline(out) + n H(+)(in) = choline(in) + n H(+)(out)</text>
        <dbReference type="Rhea" id="RHEA:75463"/>
        <dbReference type="ChEBI" id="CHEBI:15354"/>
        <dbReference type="ChEBI" id="CHEBI:15378"/>
    </reaction>
</comment>
<comment type="catalytic activity">
    <reaction evidence="1">
        <text>thiamine diphosphate(out) = thiamine diphosphate(in)</text>
        <dbReference type="Rhea" id="RHEA:75471"/>
        <dbReference type="ChEBI" id="CHEBI:58937"/>
    </reaction>
</comment>
<comment type="subcellular location">
    <subcellularLocation>
        <location evidence="1">Membrane</location>
        <topology evidence="1">Multi-pass membrane protein</topology>
    </subcellularLocation>
    <subcellularLocation>
        <location evidence="1">Apical cell membrane</location>
    </subcellularLocation>
</comment>
<comment type="PTM">
    <text evidence="1">N-glycosylated; N-glycosylation of Asn-68 and Asn-391 is required for a proper thiamine pyrophosphate uptake.</text>
</comment>
<comment type="similarity">
    <text evidence="4">Belongs to the CTL (choline transporter-like) family.</text>
</comment>
<sequence>MGGKQDQDKEAYGKPAKYDPSFRGPIRNRSCTDIICCVLFFLFILGYIAVGILAWVYGDPKQVLYPRNSTGAYCGIGENKEKPYLLYFNIFSCVLNTNIIAIAQNGLKCPTPQVCVSSCPEASWTVEPRQFSQTVEQVFYAANRNFCLPGVPGNMQVLQSLQQELCPSFLLPSTPALGRCFPWTNSTVPELPGISNTSISQSISGLLDSLNARDISVKIFEDFAQSWYWILIALGLALVLSLLFILLLRLVAGPLVFVLIIGVLGVLAYGIYHCWEEYRVLRDKGASISQLGFTTNLSAYRNVQETWLAALIILAVLEGVLLLMLIFLRQRICIAIALLKEASRAVGYIMSTMFYPLVTFALLLVCIAYWAIIALFLATSGQPQYVFWAPNSSLPGCEKVPMNTSCDPMEQVNSSCPGLMCVFQGYQSTGLAQRSLFNLQIYAVLGLFWTINWVLALGQCVLAGAFASFYWAFHKPRDIPTFPLGSAFLRTLRYHTGSLAFGALILTLVQIARVILEYIDHKLRGAQNPLTRCILCCFKCCLWCLEKFIKFLNRNAYIMIAIYGKNFCVSAKNAFMLLMRNIVRVVVLDKVTDLLLFFGKLLVVGGVGVLSFFFFTGRIPSLGKTFENPQLNYYWLPIMVSILGAYLIASGFFSVFGMCVDTLFLCFLEDLERNDGSADRPYYMSKSLLKILGKKNKGTPGDKKRKK</sequence>
<feature type="chain" id="PRO_0000359720" description="Choline transporter-like protein 4">
    <location>
        <begin position="1"/>
        <end position="707"/>
    </location>
</feature>
<feature type="topological domain" description="Cytoplasmic" evidence="3">
    <location>
        <begin position="1"/>
        <end position="33"/>
    </location>
</feature>
<feature type="transmembrane region" description="Helical" evidence="3">
    <location>
        <begin position="34"/>
        <end position="54"/>
    </location>
</feature>
<feature type="topological domain" description="Extracellular" evidence="3">
    <location>
        <begin position="55"/>
        <end position="227"/>
    </location>
</feature>
<feature type="transmembrane region" description="Helical" evidence="3">
    <location>
        <begin position="228"/>
        <end position="248"/>
    </location>
</feature>
<feature type="topological domain" description="Cytoplasmic" evidence="3">
    <location>
        <begin position="249"/>
        <end position="250"/>
    </location>
</feature>
<feature type="transmembrane region" description="Helical" evidence="3">
    <location>
        <begin position="251"/>
        <end position="271"/>
    </location>
</feature>
<feature type="topological domain" description="Extracellular" evidence="3">
    <location>
        <begin position="272"/>
        <end position="307"/>
    </location>
</feature>
<feature type="transmembrane region" description="Helical" evidence="3">
    <location>
        <begin position="308"/>
        <end position="328"/>
    </location>
</feature>
<feature type="topological domain" description="Cytoplasmic" evidence="3">
    <location>
        <begin position="329"/>
        <end position="356"/>
    </location>
</feature>
<feature type="transmembrane region" description="Helical" evidence="3">
    <location>
        <begin position="357"/>
        <end position="377"/>
    </location>
</feature>
<feature type="topological domain" description="Extracellular" evidence="3">
    <location>
        <begin position="378"/>
        <end position="452"/>
    </location>
</feature>
<feature type="transmembrane region" description="Helical" evidence="3">
    <location>
        <begin position="453"/>
        <end position="473"/>
    </location>
</feature>
<feature type="topological domain" description="Cytoplasmic" evidence="3">
    <location>
        <begin position="474"/>
        <end position="498"/>
    </location>
</feature>
<feature type="transmembrane region" description="Helical" evidence="3">
    <location>
        <begin position="499"/>
        <end position="519"/>
    </location>
</feature>
<feature type="topological domain" description="Extracellular" evidence="3">
    <location>
        <begin position="520"/>
        <end position="557"/>
    </location>
</feature>
<feature type="transmembrane region" description="Helical" evidence="3">
    <location>
        <begin position="558"/>
        <end position="578"/>
    </location>
</feature>
<feature type="topological domain" description="Cytoplasmic" evidence="3">
    <location>
        <begin position="579"/>
        <end position="594"/>
    </location>
</feature>
<feature type="transmembrane region" description="Helical" evidence="3">
    <location>
        <begin position="595"/>
        <end position="615"/>
    </location>
</feature>
<feature type="topological domain" description="Extracellular" evidence="3">
    <location>
        <begin position="616"/>
        <end position="635"/>
    </location>
</feature>
<feature type="transmembrane region" description="Helical" evidence="3">
    <location>
        <begin position="636"/>
        <end position="656"/>
    </location>
</feature>
<feature type="topological domain" description="Cytoplasmic" evidence="3">
    <location>
        <begin position="657"/>
        <end position="707"/>
    </location>
</feature>
<feature type="glycosylation site" description="N-linked (GlcNAc...) asparagine" evidence="1">
    <location>
        <position position="68"/>
    </location>
</feature>
<feature type="glycosylation site" description="N-linked (GlcNAc...) asparagine" evidence="3">
    <location>
        <position position="185"/>
    </location>
</feature>
<feature type="glycosylation site" description="N-linked (GlcNAc...) asparagine" evidence="1">
    <location>
        <position position="196"/>
    </location>
</feature>
<feature type="glycosylation site" description="N-linked (GlcNAc...) asparagine" evidence="3">
    <location>
        <position position="296"/>
    </location>
</feature>
<feature type="glycosylation site" description="N-linked (GlcNAc...) asparagine" evidence="1">
    <location>
        <position position="391"/>
    </location>
</feature>
<feature type="glycosylation site" description="N-linked (GlcNAc...) asparagine" evidence="3">
    <location>
        <position position="403"/>
    </location>
</feature>
<feature type="glycosylation site" description="N-linked (GlcNAc...) asparagine" evidence="1">
    <location>
        <position position="413"/>
    </location>
</feature>
<reference key="1">
    <citation type="submission" date="2007-02" db="EMBL/GenBank/DDBJ databases">
        <authorList>
            <consortium name="NIH - Mammalian Gene Collection (MGC) project"/>
        </authorList>
    </citation>
    <scope>NUCLEOTIDE SEQUENCE [LARGE SCALE MRNA]</scope>
    <source>
        <strain>Hereford</strain>
        <tissue>Ascending colon</tissue>
    </source>
</reference>
<dbReference type="EMBL" id="BC133403">
    <property type="protein sequence ID" value="AAI33404.1"/>
    <property type="molecule type" value="mRNA"/>
</dbReference>
<dbReference type="RefSeq" id="NP_001076911.1">
    <property type="nucleotide sequence ID" value="NM_001083442.1"/>
</dbReference>
<dbReference type="SMR" id="A3KMY4"/>
<dbReference type="FunCoup" id="A3KMY4">
    <property type="interactions" value="378"/>
</dbReference>
<dbReference type="STRING" id="9913.ENSBTAP00000042762"/>
<dbReference type="GlyCosmos" id="A3KMY4">
    <property type="glycosylation" value="7 sites, No reported glycans"/>
</dbReference>
<dbReference type="GlyGen" id="A3KMY4">
    <property type="glycosylation" value="7 sites"/>
</dbReference>
<dbReference type="PaxDb" id="9913-ENSBTAP00000042762"/>
<dbReference type="GeneID" id="520625"/>
<dbReference type="KEGG" id="bta:520625"/>
<dbReference type="CTD" id="80736"/>
<dbReference type="VEuPathDB" id="HostDB:ENSBTAG00000005675"/>
<dbReference type="eggNOG" id="KOG1362">
    <property type="taxonomic scope" value="Eukaryota"/>
</dbReference>
<dbReference type="HOGENOM" id="CLU_017181_3_1_1"/>
<dbReference type="InParanoid" id="A3KMY4"/>
<dbReference type="OMA" id="SFCNSAY"/>
<dbReference type="OrthoDB" id="420519at2759"/>
<dbReference type="TreeFam" id="TF313325"/>
<dbReference type="Reactome" id="R-BTA-1483191">
    <property type="pathway name" value="Synthesis of PC"/>
</dbReference>
<dbReference type="Reactome" id="R-BTA-425366">
    <property type="pathway name" value="Transport of bile salts and organic acids, metal ions and amine compounds"/>
</dbReference>
<dbReference type="Proteomes" id="UP000009136">
    <property type="component" value="Chromosome 23"/>
</dbReference>
<dbReference type="Bgee" id="ENSBTAG00000005675">
    <property type="expression patterns" value="Expressed in olfactory segment of nasal mucosa and 74 other cell types or tissues"/>
</dbReference>
<dbReference type="GO" id="GO:0016324">
    <property type="term" value="C:apical plasma membrane"/>
    <property type="evidence" value="ECO:0000250"/>
    <property type="project" value="UniProtKB"/>
</dbReference>
<dbReference type="GO" id="GO:0005886">
    <property type="term" value="C:plasma membrane"/>
    <property type="evidence" value="ECO:0000318"/>
    <property type="project" value="GO_Central"/>
</dbReference>
<dbReference type="GO" id="GO:0015297">
    <property type="term" value="F:antiporter activity"/>
    <property type="evidence" value="ECO:0007669"/>
    <property type="project" value="UniProtKB-KW"/>
</dbReference>
<dbReference type="GO" id="GO:0015220">
    <property type="term" value="F:choline transmembrane transporter activity"/>
    <property type="evidence" value="ECO:0000250"/>
    <property type="project" value="UniProtKB"/>
</dbReference>
<dbReference type="GO" id="GO:0090422">
    <property type="term" value="F:thiamine pyrophosphate transmembrane transporter activity"/>
    <property type="evidence" value="ECO:0000250"/>
    <property type="project" value="UniProtKB"/>
</dbReference>
<dbReference type="GO" id="GO:0008292">
    <property type="term" value="P:acetylcholine biosynthetic process"/>
    <property type="evidence" value="ECO:0000250"/>
    <property type="project" value="UniProtKB"/>
</dbReference>
<dbReference type="GO" id="GO:0061526">
    <property type="term" value="P:acetylcholine secretion"/>
    <property type="evidence" value="ECO:0000250"/>
    <property type="project" value="UniProtKB"/>
</dbReference>
<dbReference type="GO" id="GO:0015871">
    <property type="term" value="P:choline transport"/>
    <property type="evidence" value="ECO:0000250"/>
    <property type="project" value="UniProtKB"/>
</dbReference>
<dbReference type="GO" id="GO:0035675">
    <property type="term" value="P:neuromast hair cell development"/>
    <property type="evidence" value="ECO:0000250"/>
    <property type="project" value="UniProtKB"/>
</dbReference>
<dbReference type="GO" id="GO:0032475">
    <property type="term" value="P:otolith formation"/>
    <property type="evidence" value="ECO:0000250"/>
    <property type="project" value="UniProtKB"/>
</dbReference>
<dbReference type="GO" id="GO:0030307">
    <property type="term" value="P:positive regulation of cell growth"/>
    <property type="evidence" value="ECO:0000250"/>
    <property type="project" value="UniProtKB"/>
</dbReference>
<dbReference type="GO" id="GO:0030974">
    <property type="term" value="P:thiamine pyrophosphate transmembrane transport"/>
    <property type="evidence" value="ECO:0000250"/>
    <property type="project" value="UniProtKB"/>
</dbReference>
<dbReference type="InterPro" id="IPR007603">
    <property type="entry name" value="Choline_transptr-like"/>
</dbReference>
<dbReference type="PANTHER" id="PTHR12385">
    <property type="entry name" value="CHOLINE TRANSPORTER-LIKE (SLC FAMILY 44)"/>
    <property type="match status" value="1"/>
</dbReference>
<dbReference type="PANTHER" id="PTHR12385:SF37">
    <property type="entry name" value="CHOLINE TRANSPORTER-LIKE PROTEIN 4"/>
    <property type="match status" value="1"/>
</dbReference>
<dbReference type="Pfam" id="PF04515">
    <property type="entry name" value="Choline_transpo"/>
    <property type="match status" value="1"/>
</dbReference>
<protein>
    <recommendedName>
        <fullName evidence="1">Choline transporter-like protein 4</fullName>
    </recommendedName>
    <alternativeName>
        <fullName evidence="1">Solute carrier family 44 member 4</fullName>
    </alternativeName>
    <alternativeName>
        <fullName evidence="1">Thiamine pyrophosphate transporter 1</fullName>
    </alternativeName>
</protein>
<proteinExistence type="evidence at transcript level"/>
<name>CTL4_BOVIN</name>